<proteinExistence type="inferred from homology"/>
<sequence>MKYQQLENLECGWKWQYLINKWKDGETITKYIDSSEADHAVSELRKLEHEPTKVLEWIDLHMAEELDKKLKQAIRAKRKRHFNAEQIHTKKKSIDLDYRVWEKLSTRANELGCTLSDAIEYLLSEASRSEKASAAVSTLKEDLSKLLSD</sequence>
<gene>
    <name evidence="1" type="primary">matP</name>
    <name type="ordered locus">VV1664</name>
</gene>
<keyword id="KW-0131">Cell cycle</keyword>
<keyword id="KW-0132">Cell division</keyword>
<keyword id="KW-0963">Cytoplasm</keyword>
<keyword id="KW-0238">DNA-binding</keyword>
<protein>
    <recommendedName>
        <fullName evidence="1">Macrodomain Ter protein</fullName>
    </recommendedName>
</protein>
<comment type="function">
    <text evidence="1">Required for spatial organization of the terminus region of the chromosome (Ter macrodomain) during the cell cycle. Prevents early segregation of duplicated Ter macrodomains during cell division. Binds specifically to matS, which is a 13 bp signature motif repeated within the Ter macrodomain.</text>
</comment>
<comment type="subunit">
    <text evidence="1">Homodimer.</text>
</comment>
<comment type="subcellular location">
    <subcellularLocation>
        <location evidence="1">Cytoplasm</location>
    </subcellularLocation>
</comment>
<comment type="similarity">
    <text evidence="1">Belongs to the MatP family.</text>
</comment>
<feature type="chain" id="PRO_0000070361" description="Macrodomain Ter protein">
    <location>
        <begin position="1"/>
        <end position="149"/>
    </location>
</feature>
<evidence type="ECO:0000255" key="1">
    <source>
        <dbReference type="HAMAP-Rule" id="MF_01073"/>
    </source>
</evidence>
<dbReference type="EMBL" id="BA000037">
    <property type="protein sequence ID" value="BAC94428.1"/>
    <property type="molecule type" value="Genomic_DNA"/>
</dbReference>
<dbReference type="RefSeq" id="WP_011150268.1">
    <property type="nucleotide sequence ID" value="NC_005139.1"/>
</dbReference>
<dbReference type="SMR" id="Q7MKW4"/>
<dbReference type="STRING" id="672.VV93_v1c15360"/>
<dbReference type="KEGG" id="vvy:VV1664"/>
<dbReference type="eggNOG" id="COG3120">
    <property type="taxonomic scope" value="Bacteria"/>
</dbReference>
<dbReference type="HOGENOM" id="CLU_142157_0_0_6"/>
<dbReference type="Proteomes" id="UP000002675">
    <property type="component" value="Chromosome I"/>
</dbReference>
<dbReference type="GO" id="GO:0005737">
    <property type="term" value="C:cytoplasm"/>
    <property type="evidence" value="ECO:0007669"/>
    <property type="project" value="UniProtKB-SubCell"/>
</dbReference>
<dbReference type="GO" id="GO:0043565">
    <property type="term" value="F:sequence-specific DNA binding"/>
    <property type="evidence" value="ECO:0007669"/>
    <property type="project" value="UniProtKB-UniRule"/>
</dbReference>
<dbReference type="GO" id="GO:0051301">
    <property type="term" value="P:cell division"/>
    <property type="evidence" value="ECO:0007669"/>
    <property type="project" value="UniProtKB-UniRule"/>
</dbReference>
<dbReference type="GO" id="GO:0006355">
    <property type="term" value="P:regulation of DNA-templated transcription"/>
    <property type="evidence" value="ECO:0007669"/>
    <property type="project" value="InterPro"/>
</dbReference>
<dbReference type="Gene3D" id="1.20.1270.380">
    <property type="entry name" value="MatP, N-terminal domain"/>
    <property type="match status" value="1"/>
</dbReference>
<dbReference type="Gene3D" id="1.10.1220.10">
    <property type="entry name" value="Met repressor-like"/>
    <property type="match status" value="1"/>
</dbReference>
<dbReference type="HAMAP" id="MF_01073">
    <property type="entry name" value="MatP"/>
    <property type="match status" value="1"/>
</dbReference>
<dbReference type="InterPro" id="IPR013321">
    <property type="entry name" value="Arc_rbn_hlx_hlx"/>
</dbReference>
<dbReference type="InterPro" id="IPR009390">
    <property type="entry name" value="MatP"/>
</dbReference>
<dbReference type="InterPro" id="IPR035375">
    <property type="entry name" value="MatP_C"/>
</dbReference>
<dbReference type="InterPro" id="IPR035087">
    <property type="entry name" value="MatP_N"/>
</dbReference>
<dbReference type="InterPro" id="IPR038339">
    <property type="entry name" value="MatP_N_sf"/>
</dbReference>
<dbReference type="NCBIfam" id="NF003471">
    <property type="entry name" value="PRK05097.1"/>
    <property type="match status" value="1"/>
</dbReference>
<dbReference type="Pfam" id="PF06303">
    <property type="entry name" value="MatP"/>
    <property type="match status" value="1"/>
</dbReference>
<dbReference type="Pfam" id="PF17414">
    <property type="entry name" value="MatP_C"/>
    <property type="match status" value="1"/>
</dbReference>
<accession>Q7MKW4</accession>
<reference key="1">
    <citation type="journal article" date="2003" name="Genome Res.">
        <title>Comparative genome analysis of Vibrio vulnificus, a marine pathogen.</title>
        <authorList>
            <person name="Chen C.-Y."/>
            <person name="Wu K.-M."/>
            <person name="Chang Y.-C."/>
            <person name="Chang C.-H."/>
            <person name="Tsai H.-C."/>
            <person name="Liao T.-L."/>
            <person name="Liu Y.-M."/>
            <person name="Chen H.-J."/>
            <person name="Shen A.B.-T."/>
            <person name="Li J.-C."/>
            <person name="Su T.-L."/>
            <person name="Shao C.-P."/>
            <person name="Lee C.-T."/>
            <person name="Hor L.-I."/>
            <person name="Tsai S.-F."/>
        </authorList>
    </citation>
    <scope>NUCLEOTIDE SEQUENCE [LARGE SCALE GENOMIC DNA]</scope>
    <source>
        <strain>YJ016</strain>
    </source>
</reference>
<organism>
    <name type="scientific">Vibrio vulnificus (strain YJ016)</name>
    <dbReference type="NCBI Taxonomy" id="196600"/>
    <lineage>
        <taxon>Bacteria</taxon>
        <taxon>Pseudomonadati</taxon>
        <taxon>Pseudomonadota</taxon>
        <taxon>Gammaproteobacteria</taxon>
        <taxon>Vibrionales</taxon>
        <taxon>Vibrionaceae</taxon>
        <taxon>Vibrio</taxon>
    </lineage>
</organism>
<name>MATP_VIBVY</name>